<dbReference type="EC" id="2.4.1.15" evidence="1"/>
<dbReference type="EMBL" id="CP000783">
    <property type="protein sequence ID" value="ABU76595.1"/>
    <property type="molecule type" value="Genomic_DNA"/>
</dbReference>
<dbReference type="RefSeq" id="WP_012124438.1">
    <property type="nucleotide sequence ID" value="NC_009778.1"/>
</dbReference>
<dbReference type="SMR" id="A7MEE9"/>
<dbReference type="CAZy" id="GT20">
    <property type="family name" value="Glycosyltransferase Family 20"/>
</dbReference>
<dbReference type="KEGG" id="esa:ESA_01335"/>
<dbReference type="PATRIC" id="fig|290339.8.peg.1180"/>
<dbReference type="HOGENOM" id="CLU_002351_7_1_6"/>
<dbReference type="UniPathway" id="UPA00299"/>
<dbReference type="Proteomes" id="UP000000260">
    <property type="component" value="Chromosome"/>
</dbReference>
<dbReference type="GO" id="GO:0003825">
    <property type="term" value="F:alpha,alpha-trehalose-phosphate synthase (UDP-forming) activity"/>
    <property type="evidence" value="ECO:0007669"/>
    <property type="project" value="UniProtKB-EC"/>
</dbReference>
<dbReference type="GO" id="GO:0005992">
    <property type="term" value="P:trehalose biosynthetic process"/>
    <property type="evidence" value="ECO:0007669"/>
    <property type="project" value="UniProtKB-UniPathway"/>
</dbReference>
<dbReference type="CDD" id="cd03788">
    <property type="entry name" value="GT20_TPS"/>
    <property type="match status" value="1"/>
</dbReference>
<dbReference type="FunFam" id="3.40.50.2000:FF:000024">
    <property type="entry name" value="Trehalose-6-phosphate synthase"/>
    <property type="match status" value="1"/>
</dbReference>
<dbReference type="Gene3D" id="3.40.50.2000">
    <property type="entry name" value="Glycogen Phosphorylase B"/>
    <property type="match status" value="2"/>
</dbReference>
<dbReference type="InterPro" id="IPR001830">
    <property type="entry name" value="Glyco_trans_20"/>
</dbReference>
<dbReference type="InterPro" id="IPR012766">
    <property type="entry name" value="Trehalose_OtsA"/>
</dbReference>
<dbReference type="NCBIfam" id="NF007513">
    <property type="entry name" value="PRK10117.1"/>
    <property type="match status" value="1"/>
</dbReference>
<dbReference type="NCBIfam" id="TIGR02400">
    <property type="entry name" value="trehalose_OtsA"/>
    <property type="match status" value="1"/>
</dbReference>
<dbReference type="PANTHER" id="PTHR10788:SF106">
    <property type="entry name" value="BCDNA.GH08860"/>
    <property type="match status" value="1"/>
</dbReference>
<dbReference type="PANTHER" id="PTHR10788">
    <property type="entry name" value="TREHALOSE-6-PHOSPHATE SYNTHASE"/>
    <property type="match status" value="1"/>
</dbReference>
<dbReference type="Pfam" id="PF00982">
    <property type="entry name" value="Glyco_transf_20"/>
    <property type="match status" value="1"/>
</dbReference>
<dbReference type="SUPFAM" id="SSF53756">
    <property type="entry name" value="UDP-Glycosyltransferase/glycogen phosphorylase"/>
    <property type="match status" value="1"/>
</dbReference>
<accession>A7MEE9</accession>
<gene>
    <name evidence="1" type="primary">otsA</name>
    <name type="ordered locus">ESA_01335</name>
</gene>
<comment type="function">
    <text evidence="1">Probably involved in the osmoprotection via the biosynthesis of trehalose. Catalyzes the transfer of glucose from UDP-alpha-D-glucose (UDP-Glc) to D-glucose 6-phosphate (Glc-6-P) to form trehalose-6-phosphate. Acts with retention of the anomeric configuration of the UDP-sugar donor.</text>
</comment>
<comment type="catalytic activity">
    <reaction evidence="1">
        <text>D-glucose 6-phosphate + UDP-alpha-D-glucose = alpha,alpha-trehalose 6-phosphate + UDP + H(+)</text>
        <dbReference type="Rhea" id="RHEA:18889"/>
        <dbReference type="ChEBI" id="CHEBI:15378"/>
        <dbReference type="ChEBI" id="CHEBI:58223"/>
        <dbReference type="ChEBI" id="CHEBI:58429"/>
        <dbReference type="ChEBI" id="CHEBI:58885"/>
        <dbReference type="ChEBI" id="CHEBI:61548"/>
        <dbReference type="EC" id="2.4.1.15"/>
    </reaction>
</comment>
<comment type="pathway">
    <text evidence="1">Glycan biosynthesis; trehalose biosynthesis.</text>
</comment>
<comment type="subunit">
    <text evidence="1">Homotetramer.</text>
</comment>
<comment type="similarity">
    <text evidence="1">Belongs to the glycosyltransferase 20 family.</text>
</comment>
<feature type="chain" id="PRO_0000348891" description="Trehalose-6-phosphate synthase">
    <location>
        <begin position="1"/>
        <end position="474"/>
    </location>
</feature>
<feature type="binding site" evidence="1">
    <location>
        <position position="10"/>
    </location>
    <ligand>
        <name>D-glucose 6-phosphate</name>
        <dbReference type="ChEBI" id="CHEBI:61548"/>
    </ligand>
</feature>
<feature type="binding site" evidence="1">
    <location>
        <begin position="22"/>
        <end position="23"/>
    </location>
    <ligand>
        <name>UDP-alpha-D-glucose</name>
        <dbReference type="ChEBI" id="CHEBI:58885"/>
    </ligand>
</feature>
<feature type="binding site" evidence="1">
    <location>
        <position position="77"/>
    </location>
    <ligand>
        <name>D-glucose 6-phosphate</name>
        <dbReference type="ChEBI" id="CHEBI:61548"/>
    </ligand>
</feature>
<feature type="binding site" evidence="1">
    <location>
        <position position="131"/>
    </location>
    <ligand>
        <name>D-glucose 6-phosphate</name>
        <dbReference type="ChEBI" id="CHEBI:61548"/>
    </ligand>
</feature>
<feature type="binding site" evidence="1">
    <location>
        <position position="263"/>
    </location>
    <ligand>
        <name>UDP-alpha-D-glucose</name>
        <dbReference type="ChEBI" id="CHEBI:58885"/>
    </ligand>
</feature>
<feature type="binding site" evidence="1">
    <location>
        <position position="268"/>
    </location>
    <ligand>
        <name>UDP-alpha-D-glucose</name>
        <dbReference type="ChEBI" id="CHEBI:58885"/>
    </ligand>
</feature>
<feature type="binding site" evidence="1">
    <location>
        <position position="301"/>
    </location>
    <ligand>
        <name>D-glucose 6-phosphate</name>
        <dbReference type="ChEBI" id="CHEBI:61548"/>
    </ligand>
</feature>
<feature type="binding site" evidence="1">
    <location>
        <position position="340"/>
    </location>
    <ligand>
        <name>UDP-alpha-D-glucose</name>
        <dbReference type="ChEBI" id="CHEBI:58885"/>
    </ligand>
</feature>
<feature type="binding site" evidence="1">
    <location>
        <begin position="366"/>
        <end position="370"/>
    </location>
    <ligand>
        <name>UDP-alpha-D-glucose</name>
        <dbReference type="ChEBI" id="CHEBI:58885"/>
    </ligand>
</feature>
<feature type="site" description="Involved in alpha anomer selectivity" evidence="1">
    <location>
        <position position="86"/>
    </location>
</feature>
<feature type="site" description="Involved in alpha anomer selectivity" evidence="1">
    <location>
        <position position="156"/>
    </location>
</feature>
<keyword id="KW-0328">Glycosyltransferase</keyword>
<keyword id="KW-1185">Reference proteome</keyword>
<keyword id="KW-0808">Transferase</keyword>
<proteinExistence type="inferred from homology"/>
<reference key="1">
    <citation type="journal article" date="2010" name="PLoS ONE">
        <title>Genome sequence of Cronobacter sakazakii BAA-894 and comparative genomic hybridization analysis with other Cronobacter species.</title>
        <authorList>
            <person name="Kucerova E."/>
            <person name="Clifton S.W."/>
            <person name="Xia X.Q."/>
            <person name="Long F."/>
            <person name="Porwollik S."/>
            <person name="Fulton L."/>
            <person name="Fronick C."/>
            <person name="Minx P."/>
            <person name="Kyung K."/>
            <person name="Warren W."/>
            <person name="Fulton R."/>
            <person name="Feng D."/>
            <person name="Wollam A."/>
            <person name="Shah N."/>
            <person name="Bhonagiri V."/>
            <person name="Nash W.E."/>
            <person name="Hallsworth-Pepin K."/>
            <person name="Wilson R.K."/>
            <person name="McClelland M."/>
            <person name="Forsythe S.J."/>
        </authorList>
    </citation>
    <scope>NUCLEOTIDE SEQUENCE [LARGE SCALE GENOMIC DNA]</scope>
    <source>
        <strain>ATCC BAA-894</strain>
    </source>
</reference>
<evidence type="ECO:0000250" key="1">
    <source>
        <dbReference type="UniProtKB" id="P31677"/>
    </source>
</evidence>
<organism>
    <name type="scientific">Cronobacter sakazakii (strain ATCC BAA-894)</name>
    <name type="common">Enterobacter sakazakii</name>
    <dbReference type="NCBI Taxonomy" id="290339"/>
    <lineage>
        <taxon>Bacteria</taxon>
        <taxon>Pseudomonadati</taxon>
        <taxon>Pseudomonadota</taxon>
        <taxon>Gammaproteobacteria</taxon>
        <taxon>Enterobacterales</taxon>
        <taxon>Enterobacteriaceae</taxon>
        <taxon>Cronobacter</taxon>
    </lineage>
</organism>
<name>OTSA_CROS8</name>
<protein>
    <recommendedName>
        <fullName evidence="1">Trehalose-6-phosphate synthase</fullName>
        <shortName evidence="1">TPS</shortName>
        <ecNumber evidence="1">2.4.1.15</ecNumber>
    </recommendedName>
    <alternativeName>
        <fullName evidence="1">Alpha,alpha-trehalose-phosphate synthase [UDP-forming]</fullName>
    </alternativeName>
    <alternativeName>
        <fullName evidence="1">Osmoregulatory trehalose synthesis protein A</fullName>
        <shortName evidence="1">OtsA</shortName>
    </alternativeName>
    <alternativeName>
        <fullName evidence="1">UDP-glucose-glucosephosphate glucosyltransferase</fullName>
    </alternativeName>
</protein>
<sequence length="474" mass="53673">MSRLVVVSNRIAPPDDKKSSAGGLAVGILGALKAAGGLWFGWSGEIGNEDAPLKKVTRDNITWASFNLSEQDHDQYYNQFSNGVLWPAFHYRLDLVNFQREAWEGYLRVNSLLADKLKPLIEPDDNLWIHDYHLLPFASELRKRGVNNRIGFFLHIPFPTPEIFNALPTNTELLEQLCDYDLLGFQTENDRTAFLDCLAMQTHLSTSSDGEYTAYGKTFRTEVYPIGIEPEEIAQASAGPLPPKLAQLKAELASVKNIFSVERLDYSKGLPERFQAFETLLEKYPEHHGKIRYTQIAPTSRGDVQAYQDIRHQLETEAGRINGKYGQLGWTPLYYLNQHFDRKLLMKVFRYSDVGLVTPLRDGMNLVAKEYVAAQDPKNPGVLVLSQFAGAANELTAALLVNPYDRDDVAAALDRALKMPLAERIARHSEMLEIVRKNDINHWQEAFIKDLKQVTPRSPERELQNKVATFPKLA</sequence>